<dbReference type="EC" id="4.2.1.11" evidence="1"/>
<dbReference type="EMBL" id="CP000115">
    <property type="protein sequence ID" value="ABA05087.1"/>
    <property type="molecule type" value="Genomic_DNA"/>
</dbReference>
<dbReference type="RefSeq" id="WP_011315083.1">
    <property type="nucleotide sequence ID" value="NC_007406.1"/>
</dbReference>
<dbReference type="SMR" id="Q3SRK4"/>
<dbReference type="STRING" id="323098.Nwi_1827"/>
<dbReference type="KEGG" id="nwi:Nwi_1827"/>
<dbReference type="eggNOG" id="COG0148">
    <property type="taxonomic scope" value="Bacteria"/>
</dbReference>
<dbReference type="HOGENOM" id="CLU_031223_2_1_5"/>
<dbReference type="OrthoDB" id="9804716at2"/>
<dbReference type="UniPathway" id="UPA00109">
    <property type="reaction ID" value="UER00187"/>
</dbReference>
<dbReference type="Proteomes" id="UP000002531">
    <property type="component" value="Chromosome"/>
</dbReference>
<dbReference type="GO" id="GO:0009986">
    <property type="term" value="C:cell surface"/>
    <property type="evidence" value="ECO:0007669"/>
    <property type="project" value="UniProtKB-SubCell"/>
</dbReference>
<dbReference type="GO" id="GO:0005576">
    <property type="term" value="C:extracellular region"/>
    <property type="evidence" value="ECO:0007669"/>
    <property type="project" value="UniProtKB-SubCell"/>
</dbReference>
<dbReference type="GO" id="GO:0000015">
    <property type="term" value="C:phosphopyruvate hydratase complex"/>
    <property type="evidence" value="ECO:0007669"/>
    <property type="project" value="InterPro"/>
</dbReference>
<dbReference type="GO" id="GO:0000287">
    <property type="term" value="F:magnesium ion binding"/>
    <property type="evidence" value="ECO:0007669"/>
    <property type="project" value="UniProtKB-UniRule"/>
</dbReference>
<dbReference type="GO" id="GO:0004634">
    <property type="term" value="F:phosphopyruvate hydratase activity"/>
    <property type="evidence" value="ECO:0007669"/>
    <property type="project" value="UniProtKB-UniRule"/>
</dbReference>
<dbReference type="GO" id="GO:0006096">
    <property type="term" value="P:glycolytic process"/>
    <property type="evidence" value="ECO:0007669"/>
    <property type="project" value="UniProtKB-UniRule"/>
</dbReference>
<dbReference type="CDD" id="cd03313">
    <property type="entry name" value="enolase"/>
    <property type="match status" value="1"/>
</dbReference>
<dbReference type="FunFam" id="3.20.20.120:FF:000001">
    <property type="entry name" value="Enolase"/>
    <property type="match status" value="1"/>
</dbReference>
<dbReference type="FunFam" id="3.30.390.10:FF:000001">
    <property type="entry name" value="Enolase"/>
    <property type="match status" value="1"/>
</dbReference>
<dbReference type="Gene3D" id="3.20.20.120">
    <property type="entry name" value="Enolase-like C-terminal domain"/>
    <property type="match status" value="1"/>
</dbReference>
<dbReference type="Gene3D" id="3.30.390.10">
    <property type="entry name" value="Enolase-like, N-terminal domain"/>
    <property type="match status" value="1"/>
</dbReference>
<dbReference type="HAMAP" id="MF_00318">
    <property type="entry name" value="Enolase"/>
    <property type="match status" value="1"/>
</dbReference>
<dbReference type="InterPro" id="IPR000941">
    <property type="entry name" value="Enolase"/>
</dbReference>
<dbReference type="InterPro" id="IPR036849">
    <property type="entry name" value="Enolase-like_C_sf"/>
</dbReference>
<dbReference type="InterPro" id="IPR029017">
    <property type="entry name" value="Enolase-like_N"/>
</dbReference>
<dbReference type="InterPro" id="IPR020810">
    <property type="entry name" value="Enolase_C"/>
</dbReference>
<dbReference type="InterPro" id="IPR020809">
    <property type="entry name" value="Enolase_CS"/>
</dbReference>
<dbReference type="InterPro" id="IPR020811">
    <property type="entry name" value="Enolase_N"/>
</dbReference>
<dbReference type="NCBIfam" id="TIGR01060">
    <property type="entry name" value="eno"/>
    <property type="match status" value="1"/>
</dbReference>
<dbReference type="PANTHER" id="PTHR11902">
    <property type="entry name" value="ENOLASE"/>
    <property type="match status" value="1"/>
</dbReference>
<dbReference type="PANTHER" id="PTHR11902:SF1">
    <property type="entry name" value="ENOLASE"/>
    <property type="match status" value="1"/>
</dbReference>
<dbReference type="Pfam" id="PF00113">
    <property type="entry name" value="Enolase_C"/>
    <property type="match status" value="1"/>
</dbReference>
<dbReference type="Pfam" id="PF03952">
    <property type="entry name" value="Enolase_N"/>
    <property type="match status" value="1"/>
</dbReference>
<dbReference type="PIRSF" id="PIRSF001400">
    <property type="entry name" value="Enolase"/>
    <property type="match status" value="1"/>
</dbReference>
<dbReference type="PRINTS" id="PR00148">
    <property type="entry name" value="ENOLASE"/>
</dbReference>
<dbReference type="SFLD" id="SFLDS00001">
    <property type="entry name" value="Enolase"/>
    <property type="match status" value="1"/>
</dbReference>
<dbReference type="SFLD" id="SFLDF00002">
    <property type="entry name" value="enolase"/>
    <property type="match status" value="1"/>
</dbReference>
<dbReference type="SMART" id="SM01192">
    <property type="entry name" value="Enolase_C"/>
    <property type="match status" value="1"/>
</dbReference>
<dbReference type="SMART" id="SM01193">
    <property type="entry name" value="Enolase_N"/>
    <property type="match status" value="1"/>
</dbReference>
<dbReference type="SUPFAM" id="SSF51604">
    <property type="entry name" value="Enolase C-terminal domain-like"/>
    <property type="match status" value="1"/>
</dbReference>
<dbReference type="SUPFAM" id="SSF54826">
    <property type="entry name" value="Enolase N-terminal domain-like"/>
    <property type="match status" value="1"/>
</dbReference>
<dbReference type="PROSITE" id="PS00164">
    <property type="entry name" value="ENOLASE"/>
    <property type="match status" value="1"/>
</dbReference>
<protein>
    <recommendedName>
        <fullName evidence="1">Enolase</fullName>
        <ecNumber evidence="1">4.2.1.11</ecNumber>
    </recommendedName>
    <alternativeName>
        <fullName evidence="1">2-phospho-D-glycerate hydro-lyase</fullName>
    </alternativeName>
    <alternativeName>
        <fullName evidence="1">2-phosphoglycerate dehydratase</fullName>
    </alternativeName>
</protein>
<feature type="chain" id="PRO_0000267064" description="Enolase">
    <location>
        <begin position="1"/>
        <end position="426"/>
    </location>
</feature>
<feature type="active site" description="Proton donor" evidence="1">
    <location>
        <position position="205"/>
    </location>
</feature>
<feature type="active site" description="Proton acceptor" evidence="1">
    <location>
        <position position="337"/>
    </location>
</feature>
<feature type="binding site" evidence="1">
    <location>
        <position position="163"/>
    </location>
    <ligand>
        <name>(2R)-2-phosphoglycerate</name>
        <dbReference type="ChEBI" id="CHEBI:58289"/>
    </ligand>
</feature>
<feature type="binding site" evidence="1">
    <location>
        <position position="242"/>
    </location>
    <ligand>
        <name>Mg(2+)</name>
        <dbReference type="ChEBI" id="CHEBI:18420"/>
    </ligand>
</feature>
<feature type="binding site" evidence="1">
    <location>
        <position position="285"/>
    </location>
    <ligand>
        <name>Mg(2+)</name>
        <dbReference type="ChEBI" id="CHEBI:18420"/>
    </ligand>
</feature>
<feature type="binding site" evidence="1">
    <location>
        <position position="312"/>
    </location>
    <ligand>
        <name>Mg(2+)</name>
        <dbReference type="ChEBI" id="CHEBI:18420"/>
    </ligand>
</feature>
<feature type="binding site" evidence="1">
    <location>
        <position position="337"/>
    </location>
    <ligand>
        <name>(2R)-2-phosphoglycerate</name>
        <dbReference type="ChEBI" id="CHEBI:58289"/>
    </ligand>
</feature>
<feature type="binding site" evidence="1">
    <location>
        <position position="366"/>
    </location>
    <ligand>
        <name>(2R)-2-phosphoglycerate</name>
        <dbReference type="ChEBI" id="CHEBI:58289"/>
    </ligand>
</feature>
<feature type="binding site" evidence="1">
    <location>
        <position position="367"/>
    </location>
    <ligand>
        <name>(2R)-2-phosphoglycerate</name>
        <dbReference type="ChEBI" id="CHEBI:58289"/>
    </ligand>
</feature>
<feature type="binding site" evidence="1">
    <location>
        <position position="388"/>
    </location>
    <ligand>
        <name>(2R)-2-phosphoglycerate</name>
        <dbReference type="ChEBI" id="CHEBI:58289"/>
    </ligand>
</feature>
<evidence type="ECO:0000255" key="1">
    <source>
        <dbReference type="HAMAP-Rule" id="MF_00318"/>
    </source>
</evidence>
<accession>Q3SRK4</accession>
<organism>
    <name type="scientific">Nitrobacter winogradskyi (strain ATCC 25391 / DSM 10237 / CIP 104748 / NCIMB 11846 / Nb-255)</name>
    <dbReference type="NCBI Taxonomy" id="323098"/>
    <lineage>
        <taxon>Bacteria</taxon>
        <taxon>Pseudomonadati</taxon>
        <taxon>Pseudomonadota</taxon>
        <taxon>Alphaproteobacteria</taxon>
        <taxon>Hyphomicrobiales</taxon>
        <taxon>Nitrobacteraceae</taxon>
        <taxon>Nitrobacter</taxon>
    </lineage>
</organism>
<name>ENO_NITWN</name>
<reference key="1">
    <citation type="journal article" date="2006" name="Appl. Environ. Microbiol.">
        <title>Genome sequence of the chemolithoautotrophic nitrite-oxidizing bacterium Nitrobacter winogradskyi Nb-255.</title>
        <authorList>
            <person name="Starkenburg S.R."/>
            <person name="Chain P.S.G."/>
            <person name="Sayavedra-Soto L.A."/>
            <person name="Hauser L."/>
            <person name="Land M.L."/>
            <person name="Larimer F.W."/>
            <person name="Malfatti S.A."/>
            <person name="Klotz M.G."/>
            <person name="Bottomley P.J."/>
            <person name="Arp D.J."/>
            <person name="Hickey W.J."/>
        </authorList>
    </citation>
    <scope>NUCLEOTIDE SEQUENCE [LARGE SCALE GENOMIC DNA]</scope>
    <source>
        <strain>ATCC 25391 / DSM 10237 / CIP 104748 / NCIMB 11846 / Nb-255</strain>
    </source>
</reference>
<proteinExistence type="inferred from homology"/>
<gene>
    <name evidence="1" type="primary">eno</name>
    <name type="ordered locus">Nwi_1827</name>
</gene>
<sequence length="426" mass="45104">MTAIVDIIGREILDSRGNPTVEVDVVLEDGAMGRAAVPSGASTGAYEAVELRDGDNSRYHGKGVRKAVDAVNGEIFDAIGGMDAEQQAQIDETLIELDGTANKGRLGANAILGVSLALARAAADSLDIPLYRYVGGVTARTLPVPMMNIVNGGVHADNPIDFQEFMIMPVGVQTFSDALRCGSEIFHTLRSELKKAGHNTNVGDEGGFAPDLPSAGAALDFIMGAIVKAGYRPGDDVALALDPASTEFFKDGKYVYGGEGKTRSIEEQAQYLAKLASDYPIVSIEDGMAEDDFEGWKLVTDMIGKTCQLVGDDLFVTNVTRLADGIRNGRANSILIKVNQIGTLTETLAAVEMAYKAGYTAVMSHRSGETEDSTIADLAVATNCGQIKTGSLSRSDRAAKYNQLLRIEQQLGAQAKYAGRAALKAV</sequence>
<comment type="function">
    <text evidence="1">Catalyzes the reversible conversion of 2-phosphoglycerate (2-PG) into phosphoenolpyruvate (PEP). It is essential for the degradation of carbohydrates via glycolysis.</text>
</comment>
<comment type="catalytic activity">
    <reaction evidence="1">
        <text>(2R)-2-phosphoglycerate = phosphoenolpyruvate + H2O</text>
        <dbReference type="Rhea" id="RHEA:10164"/>
        <dbReference type="ChEBI" id="CHEBI:15377"/>
        <dbReference type="ChEBI" id="CHEBI:58289"/>
        <dbReference type="ChEBI" id="CHEBI:58702"/>
        <dbReference type="EC" id="4.2.1.11"/>
    </reaction>
</comment>
<comment type="cofactor">
    <cofactor evidence="1">
        <name>Mg(2+)</name>
        <dbReference type="ChEBI" id="CHEBI:18420"/>
    </cofactor>
    <text evidence="1">Binds a second Mg(2+) ion via substrate during catalysis.</text>
</comment>
<comment type="pathway">
    <text evidence="1">Carbohydrate degradation; glycolysis; pyruvate from D-glyceraldehyde 3-phosphate: step 4/5.</text>
</comment>
<comment type="subcellular location">
    <subcellularLocation>
        <location evidence="1">Cytoplasm</location>
    </subcellularLocation>
    <subcellularLocation>
        <location evidence="1">Secreted</location>
    </subcellularLocation>
    <subcellularLocation>
        <location evidence="1">Cell surface</location>
    </subcellularLocation>
    <text evidence="1">Fractions of enolase are present in both the cytoplasm and on the cell surface.</text>
</comment>
<comment type="similarity">
    <text evidence="1">Belongs to the enolase family.</text>
</comment>
<keyword id="KW-0963">Cytoplasm</keyword>
<keyword id="KW-0324">Glycolysis</keyword>
<keyword id="KW-0456">Lyase</keyword>
<keyword id="KW-0460">Magnesium</keyword>
<keyword id="KW-0479">Metal-binding</keyword>
<keyword id="KW-1185">Reference proteome</keyword>
<keyword id="KW-0964">Secreted</keyword>